<comment type="function">
    <text evidence="2">Component of the ubiquinol-cytochrome c reductase complex (complex III or cytochrome b-c1 complex) that is part of the mitochondrial respiratory chain. The b-c1 complex mediates electron transfer from ubiquinol to cytochrome c. Contributes to the generation of a proton gradient across the mitochondrial membrane that is then used for ATP synthesis.</text>
</comment>
<comment type="cofactor">
    <cofactor evidence="2">
        <name>heme b</name>
        <dbReference type="ChEBI" id="CHEBI:60344"/>
    </cofactor>
    <text evidence="2">Binds 2 heme b groups non-covalently.</text>
</comment>
<comment type="subunit">
    <text evidence="2">The cytochrome bc1 complex contains 11 subunits: 3 respiratory subunits (MT-CYB, CYC1 and UQCRFS1), 2 core proteins (UQCRC1 and UQCRC2) and 6 low-molecular weight proteins (UQCRH/QCR6, UQCRB/QCR7, UQCRQ/QCR8, UQCR10/QCR9, UQCR11/QCR10 and a cleavage product of UQCRFS1). This cytochrome bc1 complex then forms a dimer.</text>
</comment>
<comment type="subcellular location">
    <subcellularLocation>
        <location evidence="2">Mitochondrion inner membrane</location>
        <topology evidence="2">Multi-pass membrane protein</topology>
    </subcellularLocation>
</comment>
<comment type="miscellaneous">
    <text evidence="1">Heme 1 (or BL or b562) is low-potential and absorbs at about 562 nm, and heme 2 (or BH or b566) is high-potential and absorbs at about 566 nm.</text>
</comment>
<comment type="similarity">
    <text evidence="3 4">Belongs to the cytochrome b family.</text>
</comment>
<comment type="caution">
    <text evidence="2">The full-length protein contains only eight transmembrane helices, not nine as predicted by bioinformatics tools.</text>
</comment>
<sequence length="380" mass="42727">MAPNLRKSHPLLKMINNSLIDLPTPSNISAWWNFGSLLGICLLTQILTGLLLAMHYTADTTLAFSSVAHTCRNVQYGWLIRNLHANGASFFFICIYLHIGRGFYYGSYLYKETWNTGVILLLTLMATAFVGYVLPWGQMSFWGATVITNLFSAIPYIGQTLVEWAWGGFSVDNPTLTRFFALHFLLPFMITGLTTIHLTFLHESGSNNPLGITSNCDKIPFHPYFTLKDFLGFTLMLLPLTTLALFSPNLLGDPENFTPANPLITPPHIKPEWYFLFAYAILRSIPNKLGGVLALAASVLILFLAPFLHKAKQRTMTFRPISQLLFWILVTNLLILTWVGSQPVEHPFIIIGQLASITYFTILLILFPIIGALENKMLNY</sequence>
<keyword id="KW-0249">Electron transport</keyword>
<keyword id="KW-0349">Heme</keyword>
<keyword id="KW-0408">Iron</keyword>
<keyword id="KW-0472">Membrane</keyword>
<keyword id="KW-0479">Metal-binding</keyword>
<keyword id="KW-0496">Mitochondrion</keyword>
<keyword id="KW-0999">Mitochondrion inner membrane</keyword>
<keyword id="KW-0679">Respiratory chain</keyword>
<keyword id="KW-0812">Transmembrane</keyword>
<keyword id="KW-1133">Transmembrane helix</keyword>
<keyword id="KW-0813">Transport</keyword>
<keyword id="KW-0830">Ubiquinone</keyword>
<dbReference type="EMBL" id="AF076076">
    <property type="protein sequence ID" value="AAC68633.1"/>
    <property type="molecule type" value="Genomic_DNA"/>
</dbReference>
<dbReference type="SMR" id="O79221"/>
<dbReference type="GO" id="GO:0005743">
    <property type="term" value="C:mitochondrial inner membrane"/>
    <property type="evidence" value="ECO:0007669"/>
    <property type="project" value="UniProtKB-SubCell"/>
</dbReference>
<dbReference type="GO" id="GO:0045275">
    <property type="term" value="C:respiratory chain complex III"/>
    <property type="evidence" value="ECO:0007669"/>
    <property type="project" value="InterPro"/>
</dbReference>
<dbReference type="GO" id="GO:0046872">
    <property type="term" value="F:metal ion binding"/>
    <property type="evidence" value="ECO:0007669"/>
    <property type="project" value="UniProtKB-KW"/>
</dbReference>
<dbReference type="GO" id="GO:0008121">
    <property type="term" value="F:ubiquinol-cytochrome-c reductase activity"/>
    <property type="evidence" value="ECO:0007669"/>
    <property type="project" value="InterPro"/>
</dbReference>
<dbReference type="GO" id="GO:0006122">
    <property type="term" value="P:mitochondrial electron transport, ubiquinol to cytochrome c"/>
    <property type="evidence" value="ECO:0007669"/>
    <property type="project" value="TreeGrafter"/>
</dbReference>
<dbReference type="CDD" id="cd00290">
    <property type="entry name" value="cytochrome_b_C"/>
    <property type="match status" value="1"/>
</dbReference>
<dbReference type="CDD" id="cd00284">
    <property type="entry name" value="Cytochrome_b_N"/>
    <property type="match status" value="1"/>
</dbReference>
<dbReference type="FunFam" id="1.20.810.10:FF:000002">
    <property type="entry name" value="Cytochrome b"/>
    <property type="match status" value="1"/>
</dbReference>
<dbReference type="Gene3D" id="1.20.810.10">
    <property type="entry name" value="Cytochrome Bc1 Complex, Chain C"/>
    <property type="match status" value="1"/>
</dbReference>
<dbReference type="InterPro" id="IPR005798">
    <property type="entry name" value="Cyt_b/b6_C"/>
</dbReference>
<dbReference type="InterPro" id="IPR036150">
    <property type="entry name" value="Cyt_b/b6_C_sf"/>
</dbReference>
<dbReference type="InterPro" id="IPR005797">
    <property type="entry name" value="Cyt_b/b6_N"/>
</dbReference>
<dbReference type="InterPro" id="IPR027387">
    <property type="entry name" value="Cytb/b6-like_sf"/>
</dbReference>
<dbReference type="InterPro" id="IPR030689">
    <property type="entry name" value="Cytochrome_b"/>
</dbReference>
<dbReference type="InterPro" id="IPR048260">
    <property type="entry name" value="Cytochrome_b_C_euk/bac"/>
</dbReference>
<dbReference type="InterPro" id="IPR048259">
    <property type="entry name" value="Cytochrome_b_N_euk/bac"/>
</dbReference>
<dbReference type="InterPro" id="IPR016174">
    <property type="entry name" value="Di-haem_cyt_TM"/>
</dbReference>
<dbReference type="PANTHER" id="PTHR19271">
    <property type="entry name" value="CYTOCHROME B"/>
    <property type="match status" value="1"/>
</dbReference>
<dbReference type="PANTHER" id="PTHR19271:SF16">
    <property type="entry name" value="CYTOCHROME B"/>
    <property type="match status" value="1"/>
</dbReference>
<dbReference type="Pfam" id="PF00032">
    <property type="entry name" value="Cytochrom_B_C"/>
    <property type="match status" value="1"/>
</dbReference>
<dbReference type="Pfam" id="PF00033">
    <property type="entry name" value="Cytochrome_B"/>
    <property type="match status" value="1"/>
</dbReference>
<dbReference type="PIRSF" id="PIRSF038885">
    <property type="entry name" value="COB"/>
    <property type="match status" value="1"/>
</dbReference>
<dbReference type="SUPFAM" id="SSF81648">
    <property type="entry name" value="a domain/subunit of cytochrome bc1 complex (Ubiquinol-cytochrome c reductase)"/>
    <property type="match status" value="1"/>
</dbReference>
<dbReference type="SUPFAM" id="SSF81342">
    <property type="entry name" value="Transmembrane di-heme cytochromes"/>
    <property type="match status" value="1"/>
</dbReference>
<dbReference type="PROSITE" id="PS51003">
    <property type="entry name" value="CYTB_CTER"/>
    <property type="match status" value="1"/>
</dbReference>
<dbReference type="PROSITE" id="PS51002">
    <property type="entry name" value="CYTB_NTER"/>
    <property type="match status" value="1"/>
</dbReference>
<name>CYB_PELUR</name>
<protein>
    <recommendedName>
        <fullName>Cytochrome b</fullName>
    </recommendedName>
    <alternativeName>
        <fullName>Complex III subunit 3</fullName>
    </alternativeName>
    <alternativeName>
        <fullName>Complex III subunit III</fullName>
    </alternativeName>
    <alternativeName>
        <fullName>Cytochrome b-c1 complex subunit 3</fullName>
    </alternativeName>
    <alternativeName>
        <fullName>Ubiquinol-cytochrome-c reductase complex cytochrome b subunit</fullName>
    </alternativeName>
</protein>
<accession>O79221</accession>
<proteinExistence type="inferred from homology"/>
<organism>
    <name type="scientific">Pelecanoides urinatrix</name>
    <name type="common">Common diving petrel</name>
    <name type="synonym">Procellaria urinatrix</name>
    <dbReference type="NCBI Taxonomy" id="37079"/>
    <lineage>
        <taxon>Eukaryota</taxon>
        <taxon>Metazoa</taxon>
        <taxon>Chordata</taxon>
        <taxon>Craniata</taxon>
        <taxon>Vertebrata</taxon>
        <taxon>Euteleostomi</taxon>
        <taxon>Archelosauria</taxon>
        <taxon>Archosauria</taxon>
        <taxon>Dinosauria</taxon>
        <taxon>Saurischia</taxon>
        <taxon>Theropoda</taxon>
        <taxon>Coelurosauria</taxon>
        <taxon>Aves</taxon>
        <taxon>Neognathae</taxon>
        <taxon>Neoaves</taxon>
        <taxon>Aequornithes</taxon>
        <taxon>Procellariiformes</taxon>
        <taxon>Procellariidae</taxon>
        <taxon>Pelecanoides</taxon>
    </lineage>
</organism>
<reference key="1">
    <citation type="journal article" date="1998" name="Mol. Biol. Evol.">
        <title>Body size effects and rates of cytochrome-b evolution in tube-nosed seabirds.</title>
        <authorList>
            <person name="Nunn G.B."/>
            <person name="Stanley S.E."/>
        </authorList>
    </citation>
    <scope>NUCLEOTIDE SEQUENCE [GENOMIC DNA]</scope>
    <source>
        <strain>Isolate CDP-MI-1</strain>
    </source>
</reference>
<feature type="chain" id="PRO_0000061370" description="Cytochrome b">
    <location>
        <begin position="1"/>
        <end position="380"/>
    </location>
</feature>
<feature type="transmembrane region" description="Helical" evidence="2">
    <location>
        <begin position="34"/>
        <end position="54"/>
    </location>
</feature>
<feature type="transmembrane region" description="Helical" evidence="2">
    <location>
        <begin position="78"/>
        <end position="99"/>
    </location>
</feature>
<feature type="transmembrane region" description="Helical" evidence="2">
    <location>
        <begin position="114"/>
        <end position="134"/>
    </location>
</feature>
<feature type="transmembrane region" description="Helical" evidence="2">
    <location>
        <begin position="179"/>
        <end position="199"/>
    </location>
</feature>
<feature type="transmembrane region" description="Helical" evidence="2">
    <location>
        <begin position="227"/>
        <end position="247"/>
    </location>
</feature>
<feature type="transmembrane region" description="Helical" evidence="2">
    <location>
        <begin position="289"/>
        <end position="309"/>
    </location>
</feature>
<feature type="transmembrane region" description="Helical" evidence="2">
    <location>
        <begin position="321"/>
        <end position="341"/>
    </location>
</feature>
<feature type="transmembrane region" description="Helical" evidence="2">
    <location>
        <begin position="348"/>
        <end position="368"/>
    </location>
</feature>
<feature type="binding site" description="axial binding residue" evidence="2">
    <location>
        <position position="84"/>
    </location>
    <ligand>
        <name>heme b</name>
        <dbReference type="ChEBI" id="CHEBI:60344"/>
        <label>b562</label>
    </ligand>
    <ligandPart>
        <name>Fe</name>
        <dbReference type="ChEBI" id="CHEBI:18248"/>
    </ligandPart>
</feature>
<feature type="binding site" description="axial binding residue" evidence="2">
    <location>
        <position position="98"/>
    </location>
    <ligand>
        <name>heme b</name>
        <dbReference type="ChEBI" id="CHEBI:60344"/>
        <label>b566</label>
    </ligand>
    <ligandPart>
        <name>Fe</name>
        <dbReference type="ChEBI" id="CHEBI:18248"/>
    </ligandPart>
</feature>
<feature type="binding site" description="axial binding residue" evidence="2">
    <location>
        <position position="183"/>
    </location>
    <ligand>
        <name>heme b</name>
        <dbReference type="ChEBI" id="CHEBI:60344"/>
        <label>b562</label>
    </ligand>
    <ligandPart>
        <name>Fe</name>
        <dbReference type="ChEBI" id="CHEBI:18248"/>
    </ligandPart>
</feature>
<feature type="binding site" description="axial binding residue" evidence="2">
    <location>
        <position position="197"/>
    </location>
    <ligand>
        <name>heme b</name>
        <dbReference type="ChEBI" id="CHEBI:60344"/>
        <label>b566</label>
    </ligand>
    <ligandPart>
        <name>Fe</name>
        <dbReference type="ChEBI" id="CHEBI:18248"/>
    </ligandPart>
</feature>
<feature type="binding site" evidence="2">
    <location>
        <position position="202"/>
    </location>
    <ligand>
        <name>a ubiquinone</name>
        <dbReference type="ChEBI" id="CHEBI:16389"/>
    </ligand>
</feature>
<geneLocation type="mitochondrion"/>
<evidence type="ECO:0000250" key="1"/>
<evidence type="ECO:0000250" key="2">
    <source>
        <dbReference type="UniProtKB" id="P00157"/>
    </source>
</evidence>
<evidence type="ECO:0000255" key="3">
    <source>
        <dbReference type="PROSITE-ProRule" id="PRU00967"/>
    </source>
</evidence>
<evidence type="ECO:0000255" key="4">
    <source>
        <dbReference type="PROSITE-ProRule" id="PRU00968"/>
    </source>
</evidence>
<gene>
    <name type="primary">MT-CYB</name>
    <name type="synonym">COB</name>
    <name type="synonym">CYTB</name>
    <name type="synonym">MTCYB</name>
</gene>